<proteinExistence type="evidence at protein level"/>
<name>OMT1_HUMLU</name>
<organism>
    <name type="scientific">Humulus lupulus</name>
    <name type="common">European hop</name>
    <dbReference type="NCBI Taxonomy" id="3486"/>
    <lineage>
        <taxon>Eukaryota</taxon>
        <taxon>Viridiplantae</taxon>
        <taxon>Streptophyta</taxon>
        <taxon>Embryophyta</taxon>
        <taxon>Tracheophyta</taxon>
        <taxon>Spermatophyta</taxon>
        <taxon>Magnoliopsida</taxon>
        <taxon>eudicotyledons</taxon>
        <taxon>Gunneridae</taxon>
        <taxon>Pentapetalae</taxon>
        <taxon>rosids</taxon>
        <taxon>fabids</taxon>
        <taxon>Rosales</taxon>
        <taxon>Cannabaceae</taxon>
        <taxon>Humulus</taxon>
    </lineage>
</organism>
<protein>
    <recommendedName>
        <fullName evidence="5">Desmethylxanthohumol 6'-O-methyltransferase</fullName>
        <ecNumber evidence="2">2.1.1.338</ecNumber>
    </recommendedName>
    <alternativeName>
        <fullName evidence="4">O-methyltransferase 1</fullName>
        <shortName evidence="4">HlOMT1</shortName>
    </alternativeName>
</protein>
<dbReference type="EC" id="2.1.1.338" evidence="2"/>
<dbReference type="EMBL" id="EU309725">
    <property type="protein sequence ID" value="ABZ89565.1"/>
    <property type="molecule type" value="mRNA"/>
</dbReference>
<dbReference type="EMBL" id="FM164641">
    <property type="protein sequence ID" value="CAQ58423.1"/>
    <property type="molecule type" value="mRNA"/>
</dbReference>
<dbReference type="SMR" id="B0ZB55"/>
<dbReference type="KEGG" id="ag:ABZ89565"/>
<dbReference type="BRENDA" id="2.1.1.338">
    <property type="organism ID" value="2716"/>
</dbReference>
<dbReference type="GO" id="GO:0005737">
    <property type="term" value="C:cytoplasm"/>
    <property type="evidence" value="ECO:0000314"/>
    <property type="project" value="UniProtKB"/>
</dbReference>
<dbReference type="GO" id="GO:0008171">
    <property type="term" value="F:O-methyltransferase activity"/>
    <property type="evidence" value="ECO:0007669"/>
    <property type="project" value="InterPro"/>
</dbReference>
<dbReference type="GO" id="GO:0046983">
    <property type="term" value="F:protein dimerization activity"/>
    <property type="evidence" value="ECO:0007669"/>
    <property type="project" value="InterPro"/>
</dbReference>
<dbReference type="GO" id="GO:0032259">
    <property type="term" value="P:methylation"/>
    <property type="evidence" value="ECO:0007669"/>
    <property type="project" value="UniProtKB-KW"/>
</dbReference>
<dbReference type="Gene3D" id="3.40.50.150">
    <property type="entry name" value="Vaccinia Virus protein VP39"/>
    <property type="match status" value="1"/>
</dbReference>
<dbReference type="Gene3D" id="1.10.10.10">
    <property type="entry name" value="Winged helix-like DNA-binding domain superfamily/Winged helix DNA-binding domain"/>
    <property type="match status" value="1"/>
</dbReference>
<dbReference type="InterPro" id="IPR016461">
    <property type="entry name" value="COMT-like"/>
</dbReference>
<dbReference type="InterPro" id="IPR001077">
    <property type="entry name" value="O_MeTrfase_dom"/>
</dbReference>
<dbReference type="InterPro" id="IPR012967">
    <property type="entry name" value="Plant_O-MeTrfase_dimerisation"/>
</dbReference>
<dbReference type="InterPro" id="IPR029063">
    <property type="entry name" value="SAM-dependent_MTases_sf"/>
</dbReference>
<dbReference type="InterPro" id="IPR036388">
    <property type="entry name" value="WH-like_DNA-bd_sf"/>
</dbReference>
<dbReference type="InterPro" id="IPR036390">
    <property type="entry name" value="WH_DNA-bd_sf"/>
</dbReference>
<dbReference type="PANTHER" id="PTHR11746">
    <property type="entry name" value="O-METHYLTRANSFERASE"/>
    <property type="match status" value="1"/>
</dbReference>
<dbReference type="Pfam" id="PF08100">
    <property type="entry name" value="Dimerisation"/>
    <property type="match status" value="1"/>
</dbReference>
<dbReference type="Pfam" id="PF00891">
    <property type="entry name" value="Methyltransf_2"/>
    <property type="match status" value="1"/>
</dbReference>
<dbReference type="PIRSF" id="PIRSF005739">
    <property type="entry name" value="O-mtase"/>
    <property type="match status" value="1"/>
</dbReference>
<dbReference type="SUPFAM" id="SSF53335">
    <property type="entry name" value="S-adenosyl-L-methionine-dependent methyltransferases"/>
    <property type="match status" value="1"/>
</dbReference>
<dbReference type="SUPFAM" id="SSF46785">
    <property type="entry name" value="Winged helix' DNA-binding domain"/>
    <property type="match status" value="1"/>
</dbReference>
<dbReference type="PROSITE" id="PS51683">
    <property type="entry name" value="SAM_OMT_II"/>
    <property type="match status" value="1"/>
</dbReference>
<reference key="1">
    <citation type="journal article" date="2008" name="Plant Cell">
        <title>EST analysis of hop glandular trichomes identifies an O-methyltransferase that catalyzes the biosynthesis of xanthohumol.</title>
        <authorList>
            <person name="Nagel J."/>
            <person name="Culley L.K."/>
            <person name="Lu Y."/>
            <person name="Liu E."/>
            <person name="Matthews P.D."/>
            <person name="Stevens J.F."/>
            <person name="Page J.E."/>
        </authorList>
    </citation>
    <scope>NUCLEOTIDE SEQUENCE [MRNA]</scope>
    <scope>FUNCTION</scope>
    <scope>CATALYTIC ACTIVITY</scope>
    <scope>TISSUE SPECIFICITY</scope>
    <scope>SUBSTRATE SPECIFICITY</scope>
    <scope>SUBUNIT</scope>
    <scope>BIOPHYSICOCHEMICAL PROPERTIES</scope>
    <scope>ACTIVITY REGULATION</scope>
    <scope>PATHWAY</scope>
    <source>
        <strain>cv. Taurus</strain>
        <tissue>Lupulin gland</tissue>
    </source>
</reference>
<reference key="2">
    <citation type="submission" date="2008-05" db="EMBL/GenBank/DDBJ databases">
        <title>Cloning of variant of OMT1 from Czech hop Osvald's 72 and analysis of metabolome changes upon its expression in heterologous plant transgenotes.</title>
        <authorList>
            <person name="Matousek J."/>
            <person name="Patzak J."/>
            <person name="Kocabek T."/>
            <person name="Fussy Z."/>
            <person name="Heyerick A."/>
            <person name="Krofta K."/>
        </authorList>
    </citation>
    <scope>NUCLEOTIDE SEQUENCE [MRNA]</scope>
    <source>
        <strain>cv. Osvald's 72</strain>
        <tissue>Female cone</tissue>
        <tissue>Lupulin gland</tissue>
    </source>
</reference>
<reference key="3">
    <citation type="journal article" date="2018" name="Proc. Natl. Acad. Sci. U.S.A.">
        <title>Noncatalytic chalcone isomerase-fold proteins in Humulus lupulus are auxiliary components in prenylated flavonoid biosynthesis.</title>
        <authorList>
            <person name="Ban Z."/>
            <person name="Qin H."/>
            <person name="Mitchell A.J."/>
            <person name="Liu B."/>
            <person name="Zhang F."/>
            <person name="Weng J.-K."/>
            <person name="Dixon R.A."/>
            <person name="Wang G."/>
        </authorList>
    </citation>
    <scope>SUBCELLULAR LOCATION</scope>
</reference>
<reference key="4">
    <citation type="journal article" date="2019" name="Nat. Prod. Rep.">
        <title>Non-volatile natural products in plant glandular trichomes: chemistry, biological activities and biosynthesis.</title>
        <authorList>
            <person name="Liu Y."/>
            <person name="Jing S.-X."/>
            <person name="Luo S.-H."/>
            <person name="Li S.-H."/>
        </authorList>
    </citation>
    <scope>PATHWAY</scope>
    <scope>REVIEW</scope>
</reference>
<keyword id="KW-0963">Cytoplasm</keyword>
<keyword id="KW-0489">Methyltransferase</keyword>
<keyword id="KW-0949">S-adenosyl-L-methionine</keyword>
<keyword id="KW-0808">Transferase</keyword>
<evidence type="ECO:0000255" key="1">
    <source>
        <dbReference type="PROSITE-ProRule" id="PRU01020"/>
    </source>
</evidence>
<evidence type="ECO:0000269" key="2">
    <source>
    </source>
</evidence>
<evidence type="ECO:0000269" key="3">
    <source>
    </source>
</evidence>
<evidence type="ECO:0000303" key="4">
    <source>
    </source>
</evidence>
<evidence type="ECO:0000305" key="5"/>
<evidence type="ECO:0000305" key="6">
    <source>
    </source>
</evidence>
<gene>
    <name evidence="4" type="primary">OMT1</name>
</gene>
<sequence length="352" mass="39266">MESLRGQEQIWQLMFSFVDSMALKCAIELRIADIIHSHGKPITLSQIASGIRSNSNSSISPNIPYLSRIMRFLVRKNIFTEHQEDNDEVISLYGLSDSSRWLLRDFKSSLAPMVLMQTHPLSMAVWHFLEDYVRNSSNTFEKAHGCNIWEFSSANPDFNKIFNNAMASIVPIYMGAVLSSYKDGLGCIKGTVVDVGGGTGGSISELMKYYPNIKGINFDLPHVIATAPALDGVTHISGDIFESIPSADAVLMKGVLHCFSDEKCVKVLRNCRKAITDKKNGKIIILEIVLDPTSNQIFDETRMVYDLLIPLFSGGKERTELEWKRLLNEAGFTSIKITKIPIIPAIIEAFLV</sequence>
<comment type="function">
    <text evidence="2 6">Involved in the biosynthesis of prenylated phenolics natural products which contribute to the bitter taste of beer and display broad biological activities (Probable). Catalyzes the biosynthesis of xanthohumol (PubMed:18223037). Methylates desmethylxanthohumol and xanthogalenol, but not caffeic acid, prenylflavanones, simple phenols or phenylpropanoids (PubMed:18223037).</text>
</comment>
<comment type="catalytic activity">
    <reaction evidence="2">
        <text>desmethylxanthohumol + S-adenosyl-L-methionine = xanthohumol + S-adenosyl-L-homocysteine + H(+)</text>
        <dbReference type="Rhea" id="RHEA:51696"/>
        <dbReference type="ChEBI" id="CHEBI:15378"/>
        <dbReference type="ChEBI" id="CHEBI:57856"/>
        <dbReference type="ChEBI" id="CHEBI:59789"/>
        <dbReference type="ChEBI" id="CHEBI:66331"/>
        <dbReference type="ChEBI" id="CHEBI:80489"/>
        <dbReference type="EC" id="2.1.1.338"/>
    </reaction>
    <physiologicalReaction direction="left-to-right" evidence="2">
        <dbReference type="Rhea" id="RHEA:51697"/>
    </physiologicalReaction>
</comment>
<comment type="catalytic activity">
    <reaction evidence="2">
        <text>xanthogalenol + S-adenosyl-L-methionine = 4'-O-methylxanthohumol + S-adenosyl-L-homocysteine + H(+)</text>
        <dbReference type="Rhea" id="RHEA:51700"/>
        <dbReference type="ChEBI" id="CHEBI:15378"/>
        <dbReference type="ChEBI" id="CHEBI:57856"/>
        <dbReference type="ChEBI" id="CHEBI:59789"/>
        <dbReference type="ChEBI" id="CHEBI:134308"/>
        <dbReference type="ChEBI" id="CHEBI:134309"/>
        <dbReference type="EC" id="2.1.1.338"/>
    </reaction>
    <physiologicalReaction direction="left-to-right" evidence="2">
        <dbReference type="Rhea" id="RHEA:51701"/>
    </physiologicalReaction>
</comment>
<comment type="activity regulation">
    <text evidence="2">Inhibited by S-adenosyl homocysteine.</text>
</comment>
<comment type="biophysicochemical properties">
    <kinetics>
        <KM evidence="2">18 uM for desmethylxanthohumol</KM>
        <KM evidence="2">286 uM for S-adenosyl-L-methionine</KM>
        <Vmax evidence="2">55.0 pmol/sec/mg enzyme toward desmethylxanthohumol</Vmax>
        <Vmax evidence="2">56.0 pmol/sec/mg enzyme toward S-adenosyl-L-methionine</Vmax>
    </kinetics>
    <phDependence>
        <text evidence="2">Optimum pH is 9.0.</text>
    </phDependence>
    <temperatureDependence>
        <text>Optimum temperature is 30-37 degrees Celsius.</text>
    </temperatureDependence>
</comment>
<comment type="pathway">
    <text evidence="6">Secondary metabolite biosynthesis.</text>
</comment>
<comment type="subunit">
    <text evidence="2">Homodimer.</text>
</comment>
<comment type="subcellular location">
    <subcellularLocation>
        <location evidence="3">Cytoplasm</location>
    </subcellularLocation>
</comment>
<comment type="tissue specificity">
    <text evidence="2">Highly expressed in lupulin glands. Detected in early-, mid- and late-stage cones.</text>
</comment>
<comment type="similarity">
    <text evidence="5">Belongs to the class I-like SAM-binding methyltransferase superfamily. Cation-independent O-methyltransferase family.</text>
</comment>
<accession>B0ZB55</accession>
<accession>B6EFA6</accession>
<feature type="chain" id="PRO_0000439264" description="Desmethylxanthohumol 6'-O-methyltransferase">
    <location>
        <begin position="1"/>
        <end position="352"/>
    </location>
</feature>
<feature type="active site" description="Proton acceptor" evidence="1">
    <location>
        <position position="257"/>
    </location>
</feature>
<feature type="binding site" evidence="1">
    <location>
        <position position="219"/>
    </location>
    <ligand>
        <name>S-adenosyl-L-methionine</name>
        <dbReference type="ChEBI" id="CHEBI:59789"/>
    </ligand>
</feature>
<feature type="sequence conflict" description="In Ref. 2; CAQ58423." evidence="5" ref="2">
    <original>D</original>
    <variation>E</variation>
    <location>
        <position position="157"/>
    </location>
</feature>
<feature type="sequence conflict" description="In Ref. 2; CAQ58423." evidence="5" ref="2">
    <original>V</original>
    <variation>M</variation>
    <location>
        <position position="177"/>
    </location>
</feature>
<feature type="sequence conflict" description="In Ref. 2; CAQ58423." evidence="5" ref="2">
    <original>S</original>
    <variation>C</variation>
    <location>
        <position position="334"/>
    </location>
</feature>